<name>NS1_PAVCN</name>
<comment type="function">
    <text evidence="2">Multifunctional protein which displays endonuclease and helicase activities required for initiating and directing viral DNA replication. Also plays a role in viral packaging and transactivation of several promoters. Binds site-specifically to 2-3 approximate tandem copies within the origins of replication (Ori), unwinds this hairpin region and nicks one DNA strand thereby initiating the rolling circle replication (RCR). Cooperatively binds Ori with host PIF and probably other host factors, which activate the nickase function of NS1. Becomes covalently attached to the 5' end of the nick and provides a 3'OH for priming DNA synthesis. The helicase activity unwinds DNA in a 3'-5' direction on the longer strand. Inhibits the host cell cycle during the G1/S transition, the S-phase, and the G2/M transition. These arrests may provide essential cellular factors for viral DNA replication. Promotes apoptosis in host cell.</text>
</comment>
<comment type="catalytic activity">
    <reaction evidence="2">
        <text>ATP + H2O = ADP + phosphate + H(+)</text>
        <dbReference type="Rhea" id="RHEA:13065"/>
        <dbReference type="ChEBI" id="CHEBI:15377"/>
        <dbReference type="ChEBI" id="CHEBI:15378"/>
        <dbReference type="ChEBI" id="CHEBI:30616"/>
        <dbReference type="ChEBI" id="CHEBI:43474"/>
        <dbReference type="ChEBI" id="CHEBI:456216"/>
        <dbReference type="EC" id="3.6.4.12"/>
    </reaction>
</comment>
<comment type="cofactor">
    <cofactor evidence="2">
        <name>Mg(2+)</name>
        <dbReference type="ChEBI" id="CHEBI:18420"/>
    </cofactor>
    <text evidence="2">The endonuclease active site can probably bind other divalent cations.</text>
</comment>
<comment type="subunit">
    <text evidence="3">Homooligomer; when bound to DNA.</text>
</comment>
<comment type="subcellular location">
    <subcellularLocation>
        <location evidence="1">Host nucleus</location>
    </subcellularLocation>
</comment>
<comment type="domain">
    <text evidence="2 3">In the N-terminus, the endonuclease region is involved in binding to the origin of replication. In the middle, there are the ATPase and helicase activities (By similarity). The C-terminus probably contains a transactivation domain (By similarity).</text>
</comment>
<comment type="PTM">
    <text evidence="2">Phosphorylated.</text>
</comment>
<comment type="similarity">
    <text evidence="6">Belongs to the parvoviruses initiator protein NS1 family.</text>
</comment>
<accession>P12929</accession>
<proteinExistence type="inferred from homology"/>
<organism>
    <name type="scientific">Canine parvovirus type 2 (isolate Dog/United States/CPV-N/1978)</name>
    <name type="common">CPV-2</name>
    <dbReference type="NCBI Taxonomy" id="10791"/>
    <lineage>
        <taxon>Viruses</taxon>
        <taxon>Monodnaviria</taxon>
        <taxon>Shotokuvirae</taxon>
        <taxon>Cossaviricota</taxon>
        <taxon>Quintoviricetes</taxon>
        <taxon>Piccovirales</taxon>
        <taxon>Parvoviridae</taxon>
        <taxon>Parvovirinae</taxon>
        <taxon>Protoparvovirus</taxon>
        <taxon>Protoparvovirus carnivoran1</taxon>
    </lineage>
</organism>
<sequence>MSGNQYTEEVMEGVNWLKKHAENEAFSFVFKCDNVQLNGKDVRWNNYTKPIQNEELTSLIRGAQTAMDQTEEEEMDWESEVDSLAKKQVQTFDALIKKCLFEVFVSKNIEPNECVWFIQHEWGKDQGWHCHVLLHSKNLQQATGKWLRRQMNMYWSRWLVTLCSVNLTPTEKIKLREIAEDSEWVTILTYRHKQTKKDYVKMVHFGNMIAYYFLTKKKIVHMTKESGYFLSTDSGWKFNFMKYQDRQIVSTLYTEQMKPETVETTVTTAQETKRGRIQTKKEVSIKCTLRDLVSKRVTSPEDWMMLQPDSYIEMMAQPGGENLLKNTLEICTLTLARTKTAFELILEKADNTKLTNFDLANSRTCQIFRMHGWNWIKVCHAIACVLNRQGGKRNTVLFHGPASTGKSIIAQAIAQAVGNVGCYNAANVNFPFNDCTNKNLIWIEEAGNFGQQVNQFKAICSGQTIRIDQKGKGSKQIEPTPVIMTTNENITIVRIGCEERPEHTQPIRDRMLNIKLVCKLPGDFGLVDKEEWPLICAWLVKHGYESTMANYTHHWGKVPEWDENWAEPKIQEGINSPGCKDLETQAASNPQSQDQVLTPLTPDVVDLALEPWSTPDTPIAETANQQSNQLGVTHKDVQASPTWSEIEADLRAIFTSEQLEEDFRDDLD</sequence>
<gene>
    <name type="primary">NS1</name>
</gene>
<dbReference type="EC" id="3.1.21.-" evidence="3"/>
<dbReference type="EC" id="3.6.4.12" evidence="3"/>
<dbReference type="EMBL" id="M19296">
    <property type="protein sequence ID" value="AAA67459.1"/>
    <property type="molecule type" value="Genomic_DNA"/>
</dbReference>
<dbReference type="EMBL" id="M38245">
    <property type="protein sequence ID" value="AAB02798.1"/>
    <property type="molecule type" value="Genomic_DNA"/>
</dbReference>
<dbReference type="PIR" id="A29962">
    <property type="entry name" value="UYPVCP"/>
</dbReference>
<dbReference type="RefSeq" id="NP_041399.1">
    <property type="nucleotide sequence ID" value="NC_001539.1"/>
</dbReference>
<dbReference type="SMR" id="P12929"/>
<dbReference type="KEGG" id="vg:1724588"/>
<dbReference type="Proteomes" id="UP000008295">
    <property type="component" value="Segment"/>
</dbReference>
<dbReference type="GO" id="GO:0042025">
    <property type="term" value="C:host cell nucleus"/>
    <property type="evidence" value="ECO:0007669"/>
    <property type="project" value="UniProtKB-SubCell"/>
</dbReference>
<dbReference type="GO" id="GO:0005524">
    <property type="term" value="F:ATP binding"/>
    <property type="evidence" value="ECO:0007669"/>
    <property type="project" value="UniProtKB-KW"/>
</dbReference>
<dbReference type="GO" id="GO:0016887">
    <property type="term" value="F:ATP hydrolysis activity"/>
    <property type="evidence" value="ECO:0007669"/>
    <property type="project" value="RHEA"/>
</dbReference>
<dbReference type="GO" id="GO:0003677">
    <property type="term" value="F:DNA binding"/>
    <property type="evidence" value="ECO:0007669"/>
    <property type="project" value="UniProtKB-KW"/>
</dbReference>
<dbReference type="GO" id="GO:0004519">
    <property type="term" value="F:endonuclease activity"/>
    <property type="evidence" value="ECO:0007669"/>
    <property type="project" value="UniProtKB-KW"/>
</dbReference>
<dbReference type="GO" id="GO:0004386">
    <property type="term" value="F:helicase activity"/>
    <property type="evidence" value="ECO:0007669"/>
    <property type="project" value="UniProtKB-KW"/>
</dbReference>
<dbReference type="GO" id="GO:0046872">
    <property type="term" value="F:metal ion binding"/>
    <property type="evidence" value="ECO:0007669"/>
    <property type="project" value="UniProtKB-KW"/>
</dbReference>
<dbReference type="GO" id="GO:0006260">
    <property type="term" value="P:DNA replication"/>
    <property type="evidence" value="ECO:0007669"/>
    <property type="project" value="UniProtKB-KW"/>
</dbReference>
<dbReference type="GO" id="GO:0039592">
    <property type="term" value="P:symbiont-mediated arrest of host cell cycle during G2/M transition"/>
    <property type="evidence" value="ECO:0007669"/>
    <property type="project" value="UniProtKB-KW"/>
</dbReference>
<dbReference type="GO" id="GO:0052150">
    <property type="term" value="P:symbiont-mediated perturbation of host apoptosis"/>
    <property type="evidence" value="ECO:0007669"/>
    <property type="project" value="UniProtKB-KW"/>
</dbReference>
<dbReference type="GO" id="GO:0039645">
    <property type="term" value="P:symbiont-mediated perturbation of host cell cycle G1/S transition checkpoint"/>
    <property type="evidence" value="ECO:0007669"/>
    <property type="project" value="UniProtKB-KW"/>
</dbReference>
<dbReference type="GO" id="GO:0039693">
    <property type="term" value="P:viral DNA genome replication"/>
    <property type="evidence" value="ECO:0007669"/>
    <property type="project" value="UniProtKB-KW"/>
</dbReference>
<dbReference type="Gene3D" id="3.40.1310.20">
    <property type="match status" value="1"/>
</dbReference>
<dbReference type="Gene3D" id="3.40.50.300">
    <property type="entry name" value="P-loop containing nucleotide triphosphate hydrolases"/>
    <property type="match status" value="1"/>
</dbReference>
<dbReference type="InterPro" id="IPR014015">
    <property type="entry name" value="Helicase_SF3_DNA-vir"/>
</dbReference>
<dbReference type="InterPro" id="IPR027417">
    <property type="entry name" value="P-loop_NTPase"/>
</dbReference>
<dbReference type="InterPro" id="IPR021972">
    <property type="entry name" value="Parvovirus_NS1_C"/>
</dbReference>
<dbReference type="InterPro" id="IPR001257">
    <property type="entry name" value="Parvovirus_NS1_helicase"/>
</dbReference>
<dbReference type="InterPro" id="IPR021076">
    <property type="entry name" value="Parvovirus_NS1_N"/>
</dbReference>
<dbReference type="InterPro" id="IPR049901">
    <property type="entry name" value="PV_NS1-NUC"/>
</dbReference>
<dbReference type="Pfam" id="PF12117">
    <property type="entry name" value="NS1_C"/>
    <property type="match status" value="1"/>
</dbReference>
<dbReference type="Pfam" id="PF01057">
    <property type="entry name" value="Parvo_NS1"/>
    <property type="match status" value="1"/>
</dbReference>
<dbReference type="Pfam" id="PF12433">
    <property type="entry name" value="PV_NSP1"/>
    <property type="match status" value="1"/>
</dbReference>
<dbReference type="SUPFAM" id="SSF55464">
    <property type="entry name" value="Origin of replication-binding domain, RBD-like"/>
    <property type="match status" value="1"/>
</dbReference>
<dbReference type="SUPFAM" id="SSF52540">
    <property type="entry name" value="P-loop containing nucleoside triphosphate hydrolases"/>
    <property type="match status" value="1"/>
</dbReference>
<dbReference type="PROSITE" id="PS52022">
    <property type="entry name" value="PV_NS1_NUC"/>
    <property type="match status" value="1"/>
</dbReference>
<dbReference type="PROSITE" id="PS51206">
    <property type="entry name" value="SF3_HELICASE_1"/>
    <property type="match status" value="1"/>
</dbReference>
<reference key="1">
    <citation type="journal article" date="1988" name="J. Virol.">
        <title>Nucleotide sequence and genome organization of canine parvovirus.</title>
        <authorList>
            <person name="Reed A.P."/>
            <person name="Jones E.V."/>
            <person name="Miller T.J."/>
        </authorList>
    </citation>
    <scope>NUCLEOTIDE SEQUENCE [GENOMIC DNA]</scope>
</reference>
<reference key="2">
    <citation type="submission" date="1990-08" db="EMBL/GenBank/DDBJ databases">
        <authorList>
            <person name="Parrish C.R."/>
        </authorList>
    </citation>
    <scope>NUCLEOTIDE SEQUENCE [GENOMIC DNA]</scope>
</reference>
<keyword id="KW-0067">ATP-binding</keyword>
<keyword id="KW-0190">Covalent protein-DNA linkage</keyword>
<keyword id="KW-0235">DNA replication</keyword>
<keyword id="KW-0238">DNA-binding</keyword>
<keyword id="KW-0255">Endonuclease</keyword>
<keyword id="KW-1078">G1/S host cell cycle checkpoint dysregulation by virus</keyword>
<keyword id="KW-0347">Helicase</keyword>
<keyword id="KW-1079">Host G2/M cell cycle arrest by virus</keyword>
<keyword id="KW-1048">Host nucleus</keyword>
<keyword id="KW-0945">Host-virus interaction</keyword>
<keyword id="KW-0378">Hydrolase</keyword>
<keyword id="KW-0460">Magnesium</keyword>
<keyword id="KW-0479">Metal-binding</keyword>
<keyword id="KW-1119">Modulation of host cell apoptosis by virus</keyword>
<keyword id="KW-1121">Modulation of host cell cycle by virus</keyword>
<keyword id="KW-0540">Nuclease</keyword>
<keyword id="KW-0547">Nucleotide-binding</keyword>
<keyword id="KW-0804">Transcription</keyword>
<keyword id="KW-0805">Transcription regulation</keyword>
<keyword id="KW-1194">Viral DNA replication</keyword>
<keyword id="KW-0231">Viral genome packaging</keyword>
<keyword id="KW-1188">Viral release from host cell</keyword>
<evidence type="ECO:0000250" key="1">
    <source>
        <dbReference type="UniProtKB" id="D0EZM8"/>
    </source>
</evidence>
<evidence type="ECO:0000250" key="2">
    <source>
        <dbReference type="UniProtKB" id="P03134"/>
    </source>
</evidence>
<evidence type="ECO:0000250" key="3">
    <source>
        <dbReference type="UniProtKB" id="Q9PZT1"/>
    </source>
</evidence>
<evidence type="ECO:0000255" key="4">
    <source>
        <dbReference type="PROSITE-ProRule" id="PRU00551"/>
    </source>
</evidence>
<evidence type="ECO:0000255" key="5">
    <source>
        <dbReference type="PROSITE-ProRule" id="PRU01366"/>
    </source>
</evidence>
<evidence type="ECO:0000305" key="6"/>
<organismHost>
    <name type="scientific">Canis lupus familiaris</name>
    <name type="common">Dog</name>
    <name type="synonym">Canis familiaris</name>
    <dbReference type="NCBI Taxonomy" id="9615"/>
</organismHost>
<organismHost>
    <name type="scientific">Felis catus</name>
    <name type="common">Cat</name>
    <name type="synonym">Felis silvestris catus</name>
    <dbReference type="NCBI Taxonomy" id="9685"/>
</organismHost>
<protein>
    <recommendedName>
        <fullName evidence="2">Initiator protein NS1</fullName>
        <shortName>NS1</shortName>
        <ecNumber evidence="3">3.1.21.-</ecNumber>
        <ecNumber evidence="3">3.6.4.12</ecNumber>
    </recommendedName>
    <alternativeName>
        <fullName>NCVP1</fullName>
    </alternativeName>
    <alternativeName>
        <fullName>Non-capsid protein NS-1</fullName>
    </alternativeName>
    <alternativeName>
        <fullName>Non-structural protein 1</fullName>
    </alternativeName>
    <alternativeName>
        <fullName>Non-structural protein NS1</fullName>
    </alternativeName>
</protein>
<feature type="chain" id="PRO_0000222470" description="Initiator protein NS1">
    <location>
        <begin position="1"/>
        <end position="668"/>
    </location>
</feature>
<feature type="domain" description="PV NS1-Nuc" evidence="5">
    <location>
        <begin position="21"/>
        <end position="260"/>
    </location>
</feature>
<feature type="domain" description="SF3 helicase" evidence="4">
    <location>
        <begin position="367"/>
        <end position="529"/>
    </location>
</feature>
<feature type="region of interest" description="DNA-binding" evidence="2">
    <location>
        <begin position="1"/>
        <end position="277"/>
    </location>
</feature>
<feature type="region of interest" description="Ori-binding" evidence="2">
    <location>
        <begin position="193"/>
        <end position="197"/>
    </location>
</feature>
<feature type="short sequence motif" description="RCR-2" evidence="5">
    <location>
        <begin position="129"/>
        <end position="131"/>
    </location>
</feature>
<feature type="short sequence motif" description="RCR-3" evidence="5">
    <location>
        <begin position="212"/>
        <end position="216"/>
    </location>
</feature>
<feature type="active site" description="For nuclease activity" evidence="5">
    <location>
        <position position="212"/>
    </location>
</feature>
<feature type="binding site" evidence="5">
    <location>
        <position position="121"/>
    </location>
    <ligand>
        <name>a divalent metal cation</name>
        <dbReference type="ChEBI" id="CHEBI:60240"/>
    </ligand>
</feature>
<feature type="binding site" evidence="5">
    <location>
        <position position="129"/>
    </location>
    <ligand>
        <name>a divalent metal cation</name>
        <dbReference type="ChEBI" id="CHEBI:60240"/>
    </ligand>
</feature>
<feature type="binding site" evidence="5">
    <location>
        <position position="131"/>
    </location>
    <ligand>
        <name>a divalent metal cation</name>
        <dbReference type="ChEBI" id="CHEBI:60240"/>
    </ligand>
</feature>
<feature type="binding site" evidence="4">
    <location>
        <begin position="400"/>
        <end position="407"/>
    </location>
    <ligand>
        <name>ATP</name>
        <dbReference type="ChEBI" id="CHEBI:30616"/>
    </ligand>
</feature>